<comment type="function">
    <text evidence="1">Displays ATPase and GTPase activities.</text>
</comment>
<comment type="similarity">
    <text evidence="1">Belongs to the RapZ-like family.</text>
</comment>
<proteinExistence type="inferred from homology"/>
<accession>B1MC91</accession>
<feature type="chain" id="PRO_0000383264" description="Nucleotide-binding protein MAB_2783c">
    <location>
        <begin position="1"/>
        <end position="301"/>
    </location>
</feature>
<feature type="binding site" evidence="1">
    <location>
        <begin position="24"/>
        <end position="31"/>
    </location>
    <ligand>
        <name>ATP</name>
        <dbReference type="ChEBI" id="CHEBI:30616"/>
    </ligand>
</feature>
<feature type="binding site" evidence="1">
    <location>
        <begin position="75"/>
        <end position="78"/>
    </location>
    <ligand>
        <name>GTP</name>
        <dbReference type="ChEBI" id="CHEBI:37565"/>
    </ligand>
</feature>
<sequence length="301" mass="32689">MESMTLHPPSETANADIDVVLVTGLSGAGRGTTAKVLEDLGWYVADNLPPELITRMVDLGLAAGSRITQLAVVMDVRSRGFTGDLESVRADLATRGISPRVLFLEASDESLVRRYENNRRSHPLQGGQTLAEGIAAERALLSSIRASADLVIDTSSLPVPALRAAIERAFSSESVAHISVTVESFGFKYGLPMDADMVVDVRFLPNPHWVDELRPHTGQHPSVSHYVLSQPGADEFLDTYHRLLNLVIDGYRREGKRYMTIAVGCTGGKHRSVAITEALAASLAPDDDLSVRVLHRDLGRE</sequence>
<protein>
    <recommendedName>
        <fullName evidence="1">Nucleotide-binding protein MAB_2783c</fullName>
    </recommendedName>
</protein>
<gene>
    <name type="ordered locus">MAB_2783c</name>
</gene>
<organism>
    <name type="scientific">Mycobacteroides abscessus (strain ATCC 19977 / DSM 44196 / CCUG 20993 / CIP 104536 / JCM 13569 / NCTC 13031 / TMC 1543 / L948)</name>
    <name type="common">Mycobacterium abscessus</name>
    <dbReference type="NCBI Taxonomy" id="561007"/>
    <lineage>
        <taxon>Bacteria</taxon>
        <taxon>Bacillati</taxon>
        <taxon>Actinomycetota</taxon>
        <taxon>Actinomycetes</taxon>
        <taxon>Mycobacteriales</taxon>
        <taxon>Mycobacteriaceae</taxon>
        <taxon>Mycobacteroides</taxon>
        <taxon>Mycobacteroides abscessus</taxon>
    </lineage>
</organism>
<name>Y2783_MYCA9</name>
<keyword id="KW-0067">ATP-binding</keyword>
<keyword id="KW-0342">GTP-binding</keyword>
<keyword id="KW-0547">Nucleotide-binding</keyword>
<keyword id="KW-1185">Reference proteome</keyword>
<evidence type="ECO:0000255" key="1">
    <source>
        <dbReference type="HAMAP-Rule" id="MF_00636"/>
    </source>
</evidence>
<dbReference type="EMBL" id="CU458896">
    <property type="protein sequence ID" value="CAM62862.1"/>
    <property type="molecule type" value="Genomic_DNA"/>
</dbReference>
<dbReference type="SMR" id="B1MC91"/>
<dbReference type="GeneID" id="93379714"/>
<dbReference type="KEGG" id="mab:MAB_2783c"/>
<dbReference type="Proteomes" id="UP000007137">
    <property type="component" value="Chromosome"/>
</dbReference>
<dbReference type="GO" id="GO:0005524">
    <property type="term" value="F:ATP binding"/>
    <property type="evidence" value="ECO:0007669"/>
    <property type="project" value="UniProtKB-UniRule"/>
</dbReference>
<dbReference type="GO" id="GO:0005525">
    <property type="term" value="F:GTP binding"/>
    <property type="evidence" value="ECO:0007669"/>
    <property type="project" value="UniProtKB-UniRule"/>
</dbReference>
<dbReference type="HAMAP" id="MF_00636">
    <property type="entry name" value="RapZ_like"/>
    <property type="match status" value="1"/>
</dbReference>
<dbReference type="InterPro" id="IPR027417">
    <property type="entry name" value="P-loop_NTPase"/>
</dbReference>
<dbReference type="InterPro" id="IPR005337">
    <property type="entry name" value="RapZ-like"/>
</dbReference>
<dbReference type="InterPro" id="IPR053930">
    <property type="entry name" value="RapZ-like_N"/>
</dbReference>
<dbReference type="InterPro" id="IPR053931">
    <property type="entry name" value="RapZ_C"/>
</dbReference>
<dbReference type="NCBIfam" id="NF003828">
    <property type="entry name" value="PRK05416.1"/>
    <property type="match status" value="1"/>
</dbReference>
<dbReference type="PANTHER" id="PTHR30448">
    <property type="entry name" value="RNASE ADAPTER PROTEIN RAPZ"/>
    <property type="match status" value="1"/>
</dbReference>
<dbReference type="PANTHER" id="PTHR30448:SF0">
    <property type="entry name" value="RNASE ADAPTER PROTEIN RAPZ"/>
    <property type="match status" value="1"/>
</dbReference>
<dbReference type="Pfam" id="PF22740">
    <property type="entry name" value="PapZ_C"/>
    <property type="match status" value="1"/>
</dbReference>
<dbReference type="Pfam" id="PF03668">
    <property type="entry name" value="RapZ-like_N"/>
    <property type="match status" value="1"/>
</dbReference>
<dbReference type="PIRSF" id="PIRSF005052">
    <property type="entry name" value="P-loopkin"/>
    <property type="match status" value="1"/>
</dbReference>
<dbReference type="SUPFAM" id="SSF52540">
    <property type="entry name" value="P-loop containing nucleoside triphosphate hydrolases"/>
    <property type="match status" value="1"/>
</dbReference>
<reference key="1">
    <citation type="journal article" date="2009" name="PLoS ONE">
        <title>Non mycobacterial virulence genes in the genome of the emerging pathogen Mycobacterium abscessus.</title>
        <authorList>
            <person name="Ripoll F."/>
            <person name="Pasek S."/>
            <person name="Schenowitz C."/>
            <person name="Dossat C."/>
            <person name="Barbe V."/>
            <person name="Rottman M."/>
            <person name="Macheras E."/>
            <person name="Heym B."/>
            <person name="Herrmann J.L."/>
            <person name="Daffe M."/>
            <person name="Brosch R."/>
            <person name="Risler J.L."/>
            <person name="Gaillard J.L."/>
        </authorList>
    </citation>
    <scope>NUCLEOTIDE SEQUENCE [LARGE SCALE GENOMIC DNA]</scope>
    <source>
        <strain>ATCC 19977 / DSM 44196 / CCUG 20993 / CIP 104536 / JCM 13569 / NCTC 13031 / TMC 1543 / L948</strain>
    </source>
</reference>